<accession>Q84N49</accession>
<feature type="transit peptide" description="Chloroplast" evidence="2">
    <location>
        <begin position="1"/>
        <end position="54"/>
    </location>
</feature>
<feature type="chain" id="PRO_0000283615" description="CRS2-associated factor 1, chloroplastic">
    <location>
        <begin position="55"/>
        <end position="674"/>
    </location>
</feature>
<feature type="domain" description="CRM 1" evidence="3">
    <location>
        <begin position="183"/>
        <end position="279"/>
    </location>
</feature>
<feature type="domain" description="CRM 2" evidence="3">
    <location>
        <begin position="301"/>
        <end position="397"/>
    </location>
</feature>
<feature type="region of interest" description="Disordered" evidence="4">
    <location>
        <begin position="31"/>
        <end position="61"/>
    </location>
</feature>
<feature type="region of interest" description="CRS2 binding" evidence="1">
    <location>
        <begin position="554"/>
        <end position="576"/>
    </location>
</feature>
<feature type="compositionally biased region" description="Low complexity" evidence="4">
    <location>
        <begin position="48"/>
        <end position="57"/>
    </location>
</feature>
<sequence>MATARLPSRSFLSPAQQSYPRLPASVRLCLSHHEQPPTGPKRHRRAATSHPAFSAAARGRAKKIPIADTDEPAAGVRVTDRGISYRLDGAPFEFQYSYTEAPRARPVALREAPFMPFGPEATPRPWTGRKPLPKSRKELPEFDSFVLPAPGKKGVKPVQSPGPFLAGMEPRYQSVSREDILGEPLTKEEVSELVKGSLKSKRQLNMGRDGLTHNMLENIHSHWKRKRVCKIKCKGVCTIDMDNICHQLEEKVGGKVIHRQGGVIFLFRGRNYNYRTRPCFPLMLWKPVAPVYPRLVTKVPGGLTPDEATEMRTRGHQLPPICKLGKNGVYANLVNQVREAFEACDLVRVDCSGLNKSDCRKIGAKLKDLVPCILLSFEFEHILMWRGSDWKSSLPPLENSYEVTKVQESFSGKESNEKVTHSGNVLAQIELVSAATSHKNWNLDEGQEKFKDSTDSDMVLNSAKDVPALFHSTGISRTEPSADIPLEYSPLNPVCDIMDPSLNCRSIPTNNCESRALVEKSEHCPDDYNLEMKRKRNDGTKGTVVLNSGSKVEGLLCLLEQAIHSGRALVLSEDELADSDLVYEKSVAFTKSIPRRLVFENTRRKSSARRNVPDNHARTKTHLVENKMLSSPVENKFIVNGGSAMQTIDHGQEFLSDVVHQGTLRVDELAKLLA</sequence>
<gene>
    <name type="primary">CAF1</name>
</gene>
<evidence type="ECO:0000250" key="1"/>
<evidence type="ECO:0000255" key="2"/>
<evidence type="ECO:0000255" key="3">
    <source>
        <dbReference type="PROSITE-ProRule" id="PRU00626"/>
    </source>
</evidence>
<evidence type="ECO:0000256" key="4">
    <source>
        <dbReference type="SAM" id="MobiDB-lite"/>
    </source>
</evidence>
<evidence type="ECO:0000269" key="5">
    <source>
    </source>
</evidence>
<evidence type="ECO:0000269" key="6">
    <source>
    </source>
</evidence>
<dbReference type="EMBL" id="AY264368">
    <property type="protein sequence ID" value="AAP22135.1"/>
    <property type="molecule type" value="mRNA"/>
</dbReference>
<dbReference type="RefSeq" id="NP_001105220.1">
    <property type="nucleotide sequence ID" value="NM_001111750.1"/>
</dbReference>
<dbReference type="RefSeq" id="XP_008652328.1">
    <property type="nucleotide sequence ID" value="XM_008654106.1"/>
</dbReference>
<dbReference type="SMR" id="Q84N49"/>
<dbReference type="DIP" id="DIP-48740N"/>
<dbReference type="FunCoup" id="Q84N49">
    <property type="interactions" value="2722"/>
</dbReference>
<dbReference type="IntAct" id="Q84N49">
    <property type="interactions" value="4"/>
</dbReference>
<dbReference type="STRING" id="4577.Q84N49"/>
<dbReference type="PaxDb" id="4577-GRMZM2G173923_P01"/>
<dbReference type="EnsemblPlants" id="Zm00001eb306430_T001">
    <property type="protein sequence ID" value="Zm00001eb306430_P001"/>
    <property type="gene ID" value="Zm00001eb306430"/>
</dbReference>
<dbReference type="GeneID" id="542118"/>
<dbReference type="Gramene" id="Zm00001eb306430_T001">
    <property type="protein sequence ID" value="Zm00001eb306430_P001"/>
    <property type="gene ID" value="Zm00001eb306430"/>
</dbReference>
<dbReference type="KEGG" id="zma:542118"/>
<dbReference type="MaizeGDB" id="886554"/>
<dbReference type="eggNOG" id="ENOG502QQC4">
    <property type="taxonomic scope" value="Eukaryota"/>
</dbReference>
<dbReference type="InParanoid" id="Q84N49"/>
<dbReference type="OMA" id="IVPSYME"/>
<dbReference type="OrthoDB" id="2021019at2759"/>
<dbReference type="Proteomes" id="UP000007305">
    <property type="component" value="Chromosome 7"/>
</dbReference>
<dbReference type="ExpressionAtlas" id="Q84N49">
    <property type="expression patterns" value="baseline and differential"/>
</dbReference>
<dbReference type="GO" id="GO:0009570">
    <property type="term" value="C:chloroplast stroma"/>
    <property type="evidence" value="ECO:0007669"/>
    <property type="project" value="UniProtKB-SubCell"/>
</dbReference>
<dbReference type="GO" id="GO:1990904">
    <property type="term" value="C:ribonucleoprotein complex"/>
    <property type="evidence" value="ECO:0007669"/>
    <property type="project" value="UniProtKB-KW"/>
</dbReference>
<dbReference type="GO" id="GO:0003723">
    <property type="term" value="F:RNA binding"/>
    <property type="evidence" value="ECO:0007669"/>
    <property type="project" value="UniProtKB-KW"/>
</dbReference>
<dbReference type="GO" id="GO:0000373">
    <property type="term" value="P:Group II intron splicing"/>
    <property type="evidence" value="ECO:0007669"/>
    <property type="project" value="InterPro"/>
</dbReference>
<dbReference type="GO" id="GO:0006397">
    <property type="term" value="P:mRNA processing"/>
    <property type="evidence" value="ECO:0007669"/>
    <property type="project" value="UniProtKB-KW"/>
</dbReference>
<dbReference type="FunFam" id="3.30.110.60:FF:000002">
    <property type="entry name" value="CRS2-associated factor 1, chloroplastic"/>
    <property type="match status" value="2"/>
</dbReference>
<dbReference type="Gene3D" id="3.30.110.60">
    <property type="entry name" value="YhbY-like"/>
    <property type="match status" value="2"/>
</dbReference>
<dbReference type="InterPro" id="IPR044599">
    <property type="entry name" value="CAF1P_plant"/>
</dbReference>
<dbReference type="InterPro" id="IPR001890">
    <property type="entry name" value="RNA-binding_CRM"/>
</dbReference>
<dbReference type="InterPro" id="IPR035920">
    <property type="entry name" value="YhbY-like_sf"/>
</dbReference>
<dbReference type="PANTHER" id="PTHR46247">
    <property type="entry name" value="CRS2-ASSOCIATED FACTOR 1, CHLOROPLASTIC"/>
    <property type="match status" value="1"/>
</dbReference>
<dbReference type="PANTHER" id="PTHR46247:SF1">
    <property type="entry name" value="CRS2-ASSOCIATED FACTOR 1, CHLOROPLASTIC"/>
    <property type="match status" value="1"/>
</dbReference>
<dbReference type="Pfam" id="PF01985">
    <property type="entry name" value="CRS1_YhbY"/>
    <property type="match status" value="2"/>
</dbReference>
<dbReference type="SMART" id="SM01103">
    <property type="entry name" value="CRS1_YhbY"/>
    <property type="match status" value="2"/>
</dbReference>
<dbReference type="SUPFAM" id="SSF75471">
    <property type="entry name" value="YhbY-like"/>
    <property type="match status" value="2"/>
</dbReference>
<dbReference type="PROSITE" id="PS51295">
    <property type="entry name" value="CRM"/>
    <property type="match status" value="2"/>
</dbReference>
<proteinExistence type="evidence at protein level"/>
<name>CAF1P_MAIZE</name>
<reference key="1">
    <citation type="journal article" date="2003" name="EMBO J.">
        <title>Group II intron splicing factors derived by diversification of an ancient RNA-binding domain.</title>
        <authorList>
            <person name="Ostheimer G.J."/>
            <person name="Williams-Carrier R."/>
            <person name="Belcher S."/>
            <person name="Osborne E."/>
            <person name="Gierke J."/>
            <person name="Barkan A."/>
        </authorList>
    </citation>
    <scope>NUCLEOTIDE SEQUENCE [MRNA]</scope>
    <scope>FUNCTION</scope>
    <scope>SUBCELLULAR LOCATION</scope>
    <scope>INTERACTION WITH CRS2</scope>
    <source>
        <strain>cv. B73</strain>
    </source>
</reference>
<reference key="2">
    <citation type="journal article" date="2006" name="J. Biol. Chem.">
        <title>Formation of the CRS2-CAF2 group II intron splicing complex is mediated by a 22-amino acid motif in the COOH-terminal region of CAF2.</title>
        <authorList>
            <person name="Ostheimer G.J."/>
            <person name="Rojas M."/>
            <person name="Hadjivassiliou H."/>
            <person name="Barkan A."/>
        </authorList>
    </citation>
    <scope>INTERACTION WITH CRS2</scope>
</reference>
<comment type="function">
    <text evidence="5">Required for the splicing of group IIB introns in chloroplasts. Forms splicing particles with CRS2. Interacts with RNA and confers intron specificity of the splicing particles.</text>
</comment>
<comment type="subunit">
    <text evidence="5 6">Interacts with CRS2 and RNA. Part of large ribonucleo-protein complexes that include group IIB introns, CRS2 and CAF1.</text>
</comment>
<comment type="interaction">
    <interactant intactId="EBI-15761664">
        <id>Q84N49</id>
    </interactant>
    <interactant intactId="EBI-15761679">
        <id>B6TTV8</id>
        <label>WTF1</label>
    </interactant>
    <organismsDiffer>false</organismsDiffer>
    <experiments>3</experiments>
</comment>
<comment type="subcellular location">
    <subcellularLocation>
        <location evidence="5">Plastid</location>
        <location evidence="5">Chloroplast stroma</location>
    </subcellularLocation>
</comment>
<protein>
    <recommendedName>
        <fullName>CRS2-associated factor 1, chloroplastic</fullName>
    </recommendedName>
    <alternativeName>
        <fullName>Chloroplastic group IIA intron splicing facilitator CRS2-associated factor 1</fullName>
    </alternativeName>
</protein>
<keyword id="KW-0150">Chloroplast</keyword>
<keyword id="KW-0507">mRNA processing</keyword>
<keyword id="KW-0508">mRNA splicing</keyword>
<keyword id="KW-0934">Plastid</keyword>
<keyword id="KW-1185">Reference proteome</keyword>
<keyword id="KW-0677">Repeat</keyword>
<keyword id="KW-0687">Ribonucleoprotein</keyword>
<keyword id="KW-0694">RNA-binding</keyword>
<keyword id="KW-0809">Transit peptide</keyword>
<organism>
    <name type="scientific">Zea mays</name>
    <name type="common">Maize</name>
    <dbReference type="NCBI Taxonomy" id="4577"/>
    <lineage>
        <taxon>Eukaryota</taxon>
        <taxon>Viridiplantae</taxon>
        <taxon>Streptophyta</taxon>
        <taxon>Embryophyta</taxon>
        <taxon>Tracheophyta</taxon>
        <taxon>Spermatophyta</taxon>
        <taxon>Magnoliopsida</taxon>
        <taxon>Liliopsida</taxon>
        <taxon>Poales</taxon>
        <taxon>Poaceae</taxon>
        <taxon>PACMAD clade</taxon>
        <taxon>Panicoideae</taxon>
        <taxon>Andropogonodae</taxon>
        <taxon>Andropogoneae</taxon>
        <taxon>Tripsacinae</taxon>
        <taxon>Zea</taxon>
    </lineage>
</organism>